<protein>
    <recommendedName>
        <fullName evidence="1">Urease accessory protein UreF</fullName>
    </recommendedName>
</protein>
<name>UREF_STAAM</name>
<proteinExistence type="inferred from homology"/>
<comment type="function">
    <text evidence="1">Required for maturation of urease via the functional incorporation of the urease nickel metallocenter.</text>
</comment>
<comment type="subunit">
    <text evidence="1">UreD, UreF and UreG form a complex that acts as a GTP-hydrolysis-dependent molecular chaperone, activating the urease apoprotein by helping to assemble the nickel containing metallocenter of UreC. The UreE protein probably delivers the nickel.</text>
</comment>
<comment type="subcellular location">
    <subcellularLocation>
        <location evidence="1">Cytoplasm</location>
    </subcellularLocation>
</comment>
<comment type="similarity">
    <text evidence="1">Belongs to the UreF family.</text>
</comment>
<dbReference type="EMBL" id="BA000017">
    <property type="protein sequence ID" value="BAB58454.1"/>
    <property type="molecule type" value="Genomic_DNA"/>
</dbReference>
<dbReference type="RefSeq" id="WP_000565254.1">
    <property type="nucleotide sequence ID" value="NC_002758.2"/>
</dbReference>
<dbReference type="SMR" id="Q99RY0"/>
<dbReference type="KEGG" id="sav:SAV2292"/>
<dbReference type="HOGENOM" id="CLU_049215_4_2_9"/>
<dbReference type="PhylomeDB" id="Q99RY0"/>
<dbReference type="Proteomes" id="UP000002481">
    <property type="component" value="Chromosome"/>
</dbReference>
<dbReference type="GO" id="GO:0005737">
    <property type="term" value="C:cytoplasm"/>
    <property type="evidence" value="ECO:0007669"/>
    <property type="project" value="UniProtKB-SubCell"/>
</dbReference>
<dbReference type="GO" id="GO:0016151">
    <property type="term" value="F:nickel cation binding"/>
    <property type="evidence" value="ECO:0007669"/>
    <property type="project" value="UniProtKB-UniRule"/>
</dbReference>
<dbReference type="Gene3D" id="1.10.4190.10">
    <property type="entry name" value="Urease accessory protein UreF"/>
    <property type="match status" value="1"/>
</dbReference>
<dbReference type="HAMAP" id="MF_01385">
    <property type="entry name" value="UreF"/>
    <property type="match status" value="1"/>
</dbReference>
<dbReference type="InterPro" id="IPR002639">
    <property type="entry name" value="UreF"/>
</dbReference>
<dbReference type="InterPro" id="IPR038277">
    <property type="entry name" value="UreF_sf"/>
</dbReference>
<dbReference type="PANTHER" id="PTHR33620">
    <property type="entry name" value="UREASE ACCESSORY PROTEIN F"/>
    <property type="match status" value="1"/>
</dbReference>
<dbReference type="PANTHER" id="PTHR33620:SF1">
    <property type="entry name" value="UREASE ACCESSORY PROTEIN F"/>
    <property type="match status" value="1"/>
</dbReference>
<dbReference type="Pfam" id="PF01730">
    <property type="entry name" value="UreF"/>
    <property type="match status" value="1"/>
</dbReference>
<dbReference type="PIRSF" id="PIRSF009467">
    <property type="entry name" value="Ureas_acces_UreF"/>
    <property type="match status" value="1"/>
</dbReference>
<organism>
    <name type="scientific">Staphylococcus aureus (strain Mu50 / ATCC 700699)</name>
    <dbReference type="NCBI Taxonomy" id="158878"/>
    <lineage>
        <taxon>Bacteria</taxon>
        <taxon>Bacillati</taxon>
        <taxon>Bacillota</taxon>
        <taxon>Bacilli</taxon>
        <taxon>Bacillales</taxon>
        <taxon>Staphylococcaceae</taxon>
        <taxon>Staphylococcus</taxon>
    </lineage>
</organism>
<feature type="chain" id="PRO_0000344186" description="Urease accessory protein UreF">
    <location>
        <begin position="1"/>
        <end position="229"/>
    </location>
</feature>
<sequence length="229" mass="26552">MIDHTHLRLFQFCDSQFPTGAFSHSFGLETYIQRNIIHDDHTFIAWLKMFLQEQLTYSDGLAMRLVYDALENDDTQKVLHIDKLMFVQNLPKETRVGAKQMGTRMVKLALELYNSPWIAWYHQQMQDKKAKLNPAICFTMLGHHLGVDIETIIDYYLYQNVSSLTQNAVRAIPLGQTAGQKIVTHMIPYIEETRKQIFELKEADFGMTAPGLELNQMAHENVNVRIFIS</sequence>
<gene>
    <name evidence="1" type="primary">ureF</name>
    <name type="ordered locus">SAV2292</name>
</gene>
<reference key="1">
    <citation type="journal article" date="2001" name="Lancet">
        <title>Whole genome sequencing of meticillin-resistant Staphylococcus aureus.</title>
        <authorList>
            <person name="Kuroda M."/>
            <person name="Ohta T."/>
            <person name="Uchiyama I."/>
            <person name="Baba T."/>
            <person name="Yuzawa H."/>
            <person name="Kobayashi I."/>
            <person name="Cui L."/>
            <person name="Oguchi A."/>
            <person name="Aoki K."/>
            <person name="Nagai Y."/>
            <person name="Lian J.-Q."/>
            <person name="Ito T."/>
            <person name="Kanamori M."/>
            <person name="Matsumaru H."/>
            <person name="Maruyama A."/>
            <person name="Murakami H."/>
            <person name="Hosoyama A."/>
            <person name="Mizutani-Ui Y."/>
            <person name="Takahashi N.K."/>
            <person name="Sawano T."/>
            <person name="Inoue R."/>
            <person name="Kaito C."/>
            <person name="Sekimizu K."/>
            <person name="Hirakawa H."/>
            <person name="Kuhara S."/>
            <person name="Goto S."/>
            <person name="Yabuzaki J."/>
            <person name="Kanehisa M."/>
            <person name="Yamashita A."/>
            <person name="Oshima K."/>
            <person name="Furuya K."/>
            <person name="Yoshino C."/>
            <person name="Shiba T."/>
            <person name="Hattori M."/>
            <person name="Ogasawara N."/>
            <person name="Hayashi H."/>
            <person name="Hiramatsu K."/>
        </authorList>
    </citation>
    <scope>NUCLEOTIDE SEQUENCE [LARGE SCALE GENOMIC DNA]</scope>
    <source>
        <strain>Mu50 / ATCC 700699</strain>
    </source>
</reference>
<accession>Q99RY0</accession>
<evidence type="ECO:0000255" key="1">
    <source>
        <dbReference type="HAMAP-Rule" id="MF_01385"/>
    </source>
</evidence>
<keyword id="KW-0143">Chaperone</keyword>
<keyword id="KW-0963">Cytoplasm</keyword>
<keyword id="KW-0996">Nickel insertion</keyword>